<sequence>MEEVTTCSFNSPLFRQEDDRGITYRIPALLYIPPTHTFLAFAEKRSTRRDEDALHLVLRRGLRIGQLVQWGPLKPLMEATLPGHRTMNPCPVWEQKSGCVFLFFICVRGHVTERQQIVSGRNAARLCFIYSQDAGCSWSEVRDLTEEVIGSELKHWATFAVGPGHGIQLQSGRLVIPAYTYYIPSWFFCFQLPCKTRPHSLMIYSDDLGVTWHHGRLIRPMVTVECEVAEVTGRAGHPVLYCSARTPNRCRAEALSTDHGEGFQRLALSRQLCEPPHGCQGSVVSFRPLEIPHRCQDSSSKDAPTIQQSSPGSSLRLEEEAGTPSESWLLYSHPTSRKQRVDLGIYLNQTPLEAACWSRPWILHCGPCGYSDLAALEEEGLFGCLFECGTKQECEQIAFRLFTHREILSHLQGDCTSPGRNPSQFKSN</sequence>
<evidence type="ECO:0000250" key="1"/>
<evidence type="ECO:0000250" key="2">
    <source>
        <dbReference type="UniProtKB" id="O97859"/>
    </source>
</evidence>
<evidence type="ECO:0000250" key="3">
    <source>
        <dbReference type="UniProtKB" id="Q9JMH7"/>
    </source>
</evidence>
<evidence type="ECO:0000255" key="4"/>
<evidence type="ECO:0000256" key="5">
    <source>
        <dbReference type="SAM" id="MobiDB-lite"/>
    </source>
</evidence>
<evidence type="ECO:0000269" key="6">
    <source>
    </source>
</evidence>
<evidence type="ECO:0000269" key="7">
    <source>
    </source>
</evidence>
<evidence type="ECO:0000269" key="8">
    <source>
    </source>
</evidence>
<evidence type="ECO:0000269" key="9">
    <source>
    </source>
</evidence>
<evidence type="ECO:0000269" key="10">
    <source>
    </source>
</evidence>
<evidence type="ECO:0000269" key="11">
    <source>
    </source>
</evidence>
<evidence type="ECO:0000269" key="12">
    <source>
    </source>
</evidence>
<evidence type="ECO:0000269" key="13">
    <source>
    </source>
</evidence>
<evidence type="ECO:0000269" key="14">
    <source>
    </source>
</evidence>
<evidence type="ECO:0000269" key="15">
    <source>
    </source>
</evidence>
<evidence type="ECO:0000269" key="16">
    <source>
    </source>
</evidence>
<evidence type="ECO:0000303" key="17">
    <source>
    </source>
</evidence>
<evidence type="ECO:0000303" key="18">
    <source>
    </source>
</evidence>
<evidence type="ECO:0000305" key="19"/>
<evidence type="ECO:0000305" key="20">
    <source>
    </source>
</evidence>
<evidence type="ECO:0000305" key="21">
    <source>
    </source>
</evidence>
<evidence type="ECO:0000305" key="22">
    <source>
    </source>
</evidence>
<evidence type="ECO:0000305" key="23">
    <source>
    </source>
</evidence>
<evidence type="ECO:0000305" key="24">
    <source>
    </source>
</evidence>
<evidence type="ECO:0000305" key="25">
    <source>
    </source>
</evidence>
<reference key="1">
    <citation type="journal article" date="1999" name="Biochem. Biophys. Res. Commun.">
        <title>Cloning, expression, and chromosomal mapping of a human ganglioside sialidase.</title>
        <authorList>
            <person name="Wada T."/>
            <person name="Yoshikawa Y."/>
            <person name="Tokuyama S."/>
            <person name="Kuwabara M."/>
            <person name="Akita H."/>
            <person name="Miyagi T."/>
        </authorList>
    </citation>
    <scope>NUCLEOTIDE SEQUENCE [MRNA] (ISOFORM 1)</scope>
    <scope>FUNCTION</scope>
    <scope>CATALYTIC ACTIVITY</scope>
    <scope>BIOPHYSICOCHEMICAL PROPERTIES</scope>
    <source>
        <tissue>Brain</tissue>
    </source>
</reference>
<reference key="2">
    <citation type="journal article" date="2000" name="Biochem. J.">
        <title>Identification and expression of NEU3, a novel human sialidase associated to the plasma membrane.</title>
        <authorList>
            <person name="Monti E."/>
            <person name="Bassi M.T."/>
            <person name="Papini N."/>
            <person name="Riboni M."/>
            <person name="Manzoni M."/>
            <person name="Venerando B."/>
            <person name="Croci G."/>
            <person name="Preti A."/>
            <person name="Ballabio A."/>
            <person name="Tettamanti G."/>
            <person name="Borsani G."/>
        </authorList>
    </citation>
    <scope>NUCLEOTIDE SEQUENCE [MRNA] (ISOFORM 1)</scope>
    <scope>FUNCTION</scope>
    <scope>CATALYTIC ACTIVITY</scope>
    <scope>TISSUE SPECIFICITY</scope>
    <scope>SUBCELLULAR LOCATION</scope>
    <source>
        <tissue>Skeletal muscle</tissue>
    </source>
</reference>
<reference key="3">
    <citation type="journal article" date="2004" name="Nat. Genet.">
        <title>Complete sequencing and characterization of 21,243 full-length human cDNAs.</title>
        <authorList>
            <person name="Ota T."/>
            <person name="Suzuki Y."/>
            <person name="Nishikawa T."/>
            <person name="Otsuki T."/>
            <person name="Sugiyama T."/>
            <person name="Irie R."/>
            <person name="Wakamatsu A."/>
            <person name="Hayashi K."/>
            <person name="Sato H."/>
            <person name="Nagai K."/>
            <person name="Kimura K."/>
            <person name="Makita H."/>
            <person name="Sekine M."/>
            <person name="Obayashi M."/>
            <person name="Nishi T."/>
            <person name="Shibahara T."/>
            <person name="Tanaka T."/>
            <person name="Ishii S."/>
            <person name="Yamamoto J."/>
            <person name="Saito K."/>
            <person name="Kawai Y."/>
            <person name="Isono Y."/>
            <person name="Nakamura Y."/>
            <person name="Nagahari K."/>
            <person name="Murakami K."/>
            <person name="Yasuda T."/>
            <person name="Iwayanagi T."/>
            <person name="Wagatsuma M."/>
            <person name="Shiratori A."/>
            <person name="Sudo H."/>
            <person name="Hosoiri T."/>
            <person name="Kaku Y."/>
            <person name="Kodaira H."/>
            <person name="Kondo H."/>
            <person name="Sugawara M."/>
            <person name="Takahashi M."/>
            <person name="Kanda K."/>
            <person name="Yokoi T."/>
            <person name="Furuya T."/>
            <person name="Kikkawa E."/>
            <person name="Omura Y."/>
            <person name="Abe K."/>
            <person name="Kamihara K."/>
            <person name="Katsuta N."/>
            <person name="Sato K."/>
            <person name="Tanikawa M."/>
            <person name="Yamazaki M."/>
            <person name="Ninomiya K."/>
            <person name="Ishibashi T."/>
            <person name="Yamashita H."/>
            <person name="Murakawa K."/>
            <person name="Fujimori K."/>
            <person name="Tanai H."/>
            <person name="Kimata M."/>
            <person name="Watanabe M."/>
            <person name="Hiraoka S."/>
            <person name="Chiba Y."/>
            <person name="Ishida S."/>
            <person name="Ono Y."/>
            <person name="Takiguchi S."/>
            <person name="Watanabe S."/>
            <person name="Yosida M."/>
            <person name="Hotuta T."/>
            <person name="Kusano J."/>
            <person name="Kanehori K."/>
            <person name="Takahashi-Fujii A."/>
            <person name="Hara H."/>
            <person name="Tanase T.-O."/>
            <person name="Nomura Y."/>
            <person name="Togiya S."/>
            <person name="Komai F."/>
            <person name="Hara R."/>
            <person name="Takeuchi K."/>
            <person name="Arita M."/>
            <person name="Imose N."/>
            <person name="Musashino K."/>
            <person name="Yuuki H."/>
            <person name="Oshima A."/>
            <person name="Sasaki N."/>
            <person name="Aotsuka S."/>
            <person name="Yoshikawa Y."/>
            <person name="Matsunawa H."/>
            <person name="Ichihara T."/>
            <person name="Shiohata N."/>
            <person name="Sano S."/>
            <person name="Moriya S."/>
            <person name="Momiyama H."/>
            <person name="Satoh N."/>
            <person name="Takami S."/>
            <person name="Terashima Y."/>
            <person name="Suzuki O."/>
            <person name="Nakagawa S."/>
            <person name="Senoh A."/>
            <person name="Mizoguchi H."/>
            <person name="Goto Y."/>
            <person name="Shimizu F."/>
            <person name="Wakebe H."/>
            <person name="Hishigaki H."/>
            <person name="Watanabe T."/>
            <person name="Sugiyama A."/>
            <person name="Takemoto M."/>
            <person name="Kawakami B."/>
            <person name="Yamazaki M."/>
            <person name="Watanabe K."/>
            <person name="Kumagai A."/>
            <person name="Itakura S."/>
            <person name="Fukuzumi Y."/>
            <person name="Fujimori Y."/>
            <person name="Komiyama M."/>
            <person name="Tashiro H."/>
            <person name="Tanigami A."/>
            <person name="Fujiwara T."/>
            <person name="Ono T."/>
            <person name="Yamada K."/>
            <person name="Fujii Y."/>
            <person name="Ozaki K."/>
            <person name="Hirao M."/>
            <person name="Ohmori Y."/>
            <person name="Kawabata A."/>
            <person name="Hikiji T."/>
            <person name="Kobatake N."/>
            <person name="Inagaki H."/>
            <person name="Ikema Y."/>
            <person name="Okamoto S."/>
            <person name="Okitani R."/>
            <person name="Kawakami T."/>
            <person name="Noguchi S."/>
            <person name="Itoh T."/>
            <person name="Shigeta K."/>
            <person name="Senba T."/>
            <person name="Matsumura K."/>
            <person name="Nakajima Y."/>
            <person name="Mizuno T."/>
            <person name="Morinaga M."/>
            <person name="Sasaki M."/>
            <person name="Togashi T."/>
            <person name="Oyama M."/>
            <person name="Hata H."/>
            <person name="Watanabe M."/>
            <person name="Komatsu T."/>
            <person name="Mizushima-Sugano J."/>
            <person name="Satoh T."/>
            <person name="Shirai Y."/>
            <person name="Takahashi Y."/>
            <person name="Nakagawa K."/>
            <person name="Okumura K."/>
            <person name="Nagase T."/>
            <person name="Nomura N."/>
            <person name="Kikuchi H."/>
            <person name="Masuho Y."/>
            <person name="Yamashita R."/>
            <person name="Nakai K."/>
            <person name="Yada T."/>
            <person name="Nakamura Y."/>
            <person name="Ohara O."/>
            <person name="Isogai T."/>
            <person name="Sugano S."/>
        </authorList>
    </citation>
    <scope>NUCLEOTIDE SEQUENCE [LARGE SCALE MRNA] (ISOFORM 2)</scope>
    <source>
        <tissue>Mammary gland</tissue>
    </source>
</reference>
<reference key="4">
    <citation type="journal article" date="2006" name="Nature">
        <title>Human chromosome 11 DNA sequence and analysis including novel gene identification.</title>
        <authorList>
            <person name="Taylor T.D."/>
            <person name="Noguchi H."/>
            <person name="Totoki Y."/>
            <person name="Toyoda A."/>
            <person name="Kuroki Y."/>
            <person name="Dewar K."/>
            <person name="Lloyd C."/>
            <person name="Itoh T."/>
            <person name="Takeda T."/>
            <person name="Kim D.-W."/>
            <person name="She X."/>
            <person name="Barlow K.F."/>
            <person name="Bloom T."/>
            <person name="Bruford E."/>
            <person name="Chang J.L."/>
            <person name="Cuomo C.A."/>
            <person name="Eichler E."/>
            <person name="FitzGerald M.G."/>
            <person name="Jaffe D.B."/>
            <person name="LaButti K."/>
            <person name="Nicol R."/>
            <person name="Park H.-S."/>
            <person name="Seaman C."/>
            <person name="Sougnez C."/>
            <person name="Yang X."/>
            <person name="Zimmer A.R."/>
            <person name="Zody M.C."/>
            <person name="Birren B.W."/>
            <person name="Nusbaum C."/>
            <person name="Fujiyama A."/>
            <person name="Hattori M."/>
            <person name="Rogers J."/>
            <person name="Lander E.S."/>
            <person name="Sakaki Y."/>
        </authorList>
    </citation>
    <scope>NUCLEOTIDE SEQUENCE [LARGE SCALE GENOMIC DNA]</scope>
</reference>
<reference key="5">
    <citation type="submission" date="2005-07" db="EMBL/GenBank/DDBJ databases">
        <authorList>
            <person name="Mural R.J."/>
            <person name="Istrail S."/>
            <person name="Sutton G."/>
            <person name="Florea L."/>
            <person name="Halpern A.L."/>
            <person name="Mobarry C.M."/>
            <person name="Lippert R."/>
            <person name="Walenz B."/>
            <person name="Shatkay H."/>
            <person name="Dew I."/>
            <person name="Miller J.R."/>
            <person name="Flanigan M.J."/>
            <person name="Edwards N.J."/>
            <person name="Bolanos R."/>
            <person name="Fasulo D."/>
            <person name="Halldorsson B.V."/>
            <person name="Hannenhalli S."/>
            <person name="Turner R."/>
            <person name="Yooseph S."/>
            <person name="Lu F."/>
            <person name="Nusskern D.R."/>
            <person name="Shue B.C."/>
            <person name="Zheng X.H."/>
            <person name="Zhong F."/>
            <person name="Delcher A.L."/>
            <person name="Huson D.H."/>
            <person name="Kravitz S.A."/>
            <person name="Mouchard L."/>
            <person name="Reinert K."/>
            <person name="Remington K.A."/>
            <person name="Clark A.G."/>
            <person name="Waterman M.S."/>
            <person name="Eichler E.E."/>
            <person name="Adams M.D."/>
            <person name="Hunkapiller M.W."/>
            <person name="Myers E.W."/>
            <person name="Venter J.C."/>
        </authorList>
    </citation>
    <scope>NUCLEOTIDE SEQUENCE [LARGE SCALE GENOMIC DNA]</scope>
</reference>
<reference key="6">
    <citation type="journal article" date="2004" name="Genome Res.">
        <title>The status, quality, and expansion of the NIH full-length cDNA project: the Mammalian Gene Collection (MGC).</title>
        <authorList>
            <consortium name="The MGC Project Team"/>
        </authorList>
    </citation>
    <scope>NUCLEOTIDE SEQUENCE [LARGE SCALE MRNA] (ISOFORM 2)</scope>
    <source>
        <tissue>Testis</tissue>
    </source>
</reference>
<reference key="7">
    <citation type="journal article" date="2001" name="Eur. J. Biochem.">
        <title>Site-directed mutagenesis of human membrane-associated ganglioside sialidase: identification of amino-acid residues contributing to substrate specificity.</title>
        <authorList>
            <person name="Wang Y."/>
            <person name="Yamaguchi K."/>
            <person name="Shimada Y."/>
            <person name="Zhao X."/>
            <person name="Miyagi T."/>
        </authorList>
    </citation>
    <scope>FUNCTION</scope>
    <scope>CATALYTIC ACTIVITY</scope>
    <scope>BIOPHYSICOCHEMICAL PROPERTIES</scope>
    <scope>MUTAGENESIS OF ARG-25; GLU-51; ASN-88; VAL-107; ARG-114; GLY-162 AND TYR-370</scope>
</reference>
<reference key="8">
    <citation type="journal article" date="2002" name="J. Biol. Chem.">
        <title>A close association of the ganglioside-specific sialidase Neu3 with caveolin in membrane microdomains.</title>
        <authorList>
            <person name="Wang Y."/>
            <person name="Yamaguchi K."/>
            <person name="Wada T."/>
            <person name="Hata K."/>
            <person name="Zhao X."/>
            <person name="Fujimoto T."/>
            <person name="Miyagi T."/>
        </authorList>
    </citation>
    <scope>FUNCTION</scope>
    <scope>CATALYTIC ACTIVITY</scope>
    <scope>SUBCELLULAR LOCATION</scope>
    <scope>MUTAGENESIS OF TYR-181 AND PHE-187</scope>
    <scope>INTERACTION WITH CAV1</scope>
</reference>
<reference key="9">
    <citation type="journal article" date="2005" name="Biochem. J.">
        <title>Evidence for mitochondrial localization of a novel human sialidase (NEU4).</title>
        <authorList>
            <person name="Yamaguchi K."/>
            <person name="Hata K."/>
            <person name="Koseki K."/>
            <person name="Shiozaki K."/>
            <person name="Akita H."/>
            <person name="Wada T."/>
            <person name="Moriya S."/>
            <person name="Miyagi T."/>
        </authorList>
    </citation>
    <scope>FUNCTION</scope>
    <scope>CATALYTIC ACTIVITY</scope>
</reference>
<reference key="10">
    <citation type="journal article" date="2007" name="Biochem. J.">
        <title>Sialidase NEU3 is a peripheral membrane protein localized on the cell surface and in endosomal structures.</title>
        <authorList>
            <person name="Zanchetti G."/>
            <person name="Colombi P."/>
            <person name="Manzoni M."/>
            <person name="Anastasia L."/>
            <person name="Caimi L."/>
            <person name="Borsani G."/>
            <person name="Venerando B."/>
            <person name="Tettamanti G."/>
            <person name="Preti A."/>
            <person name="Monti E."/>
            <person name="Bresciani R."/>
        </authorList>
    </citation>
    <scope>SUBCELLULAR LOCATION</scope>
</reference>
<reference key="11">
    <citation type="journal article" date="2007" name="Oncogene">
        <title>A crucial role of plasma membrane-associated sialidase in the survival of human cancer cells.</title>
        <authorList>
            <person name="Wada T."/>
            <person name="Hata K."/>
            <person name="Yamaguchi K."/>
            <person name="Shiozaki K."/>
            <person name="Koseki K."/>
            <person name="Moriya S."/>
            <person name="Miyagi T."/>
        </authorList>
    </citation>
    <scope>FUNCTION</scope>
    <scope>CATALYTIC ACTIVITY</scope>
    <scope>INTERACTION WITH EGFR</scope>
</reference>
<reference key="12">
    <citation type="journal article" date="2008" name="Mol. Cell">
        <title>Kinase-selective enrichment enables quantitative phosphoproteomics of the kinome across the cell cycle.</title>
        <authorList>
            <person name="Daub H."/>
            <person name="Olsen J.V."/>
            <person name="Bairlein M."/>
            <person name="Gnad F."/>
            <person name="Oppermann F.S."/>
            <person name="Korner R."/>
            <person name="Greff Z."/>
            <person name="Keri G."/>
            <person name="Stemmann O."/>
            <person name="Mann M."/>
        </authorList>
    </citation>
    <scope>IDENTIFICATION BY MASS SPECTROMETRY [LARGE SCALE ANALYSIS]</scope>
    <source>
        <tissue>Cervix carcinoma</tissue>
    </source>
</reference>
<reference key="13">
    <citation type="journal article" date="2010" name="Glycobiology">
        <title>Insight into substrate recognition and catalysis by the human neuraminidase 3 (NEU3) through molecular modeling and site-directed mutagenesis.</title>
        <authorList>
            <person name="Albohy A."/>
            <person name="Li M.D."/>
            <person name="Zheng R.B."/>
            <person name="Zou C."/>
            <person name="Cairo C.W."/>
        </authorList>
    </citation>
    <scope>FUNCTION</scope>
    <scope>CATALYTIC ACTIVITY</scope>
    <scope>ACTIVE SITE</scope>
    <scope>BINDING SITES</scope>
    <scope>MUTAGENESIS OF ARG-45; ASP-50; TYR-179; TYR-181; GLU-225; ARG-245; ARG-340 AND TYR-370</scope>
</reference>
<reference key="14">
    <citation type="journal article" date="2013" name="J. Proteome Res.">
        <title>Toward a comprehensive characterization of a human cancer cell phosphoproteome.</title>
        <authorList>
            <person name="Zhou H."/>
            <person name="Di Palma S."/>
            <person name="Preisinger C."/>
            <person name="Peng M."/>
            <person name="Polat A.N."/>
            <person name="Heck A.J."/>
            <person name="Mohammed S."/>
        </authorList>
    </citation>
    <scope>IDENTIFICATION BY MASS SPECTROMETRY [LARGE SCALE ANALYSIS]</scope>
    <source>
        <tissue>Erythroleukemia</tissue>
    </source>
</reference>
<reference key="15">
    <citation type="journal article" date="2015" name="Biochem. J.">
        <title>Role of plasma-membrane-bound sialidase NEU3 in clathrin-mediated endocytosis.</title>
        <authorList>
            <person name="Rodriguez-Walker M."/>
            <person name="Vilcaes A.A."/>
            <person name="Garbarino-Pico E."/>
            <person name="Daniotti J.L."/>
        </authorList>
    </citation>
    <scope>FUNCTION</scope>
    <scope>SUBCELLULAR LOCATION</scope>
</reference>
<reference key="16">
    <citation type="journal article" date="2015" name="Glycobiology">
        <title>NEU3 activity enhances EGFR activation without affecting EGFR expression and acts on its sialylation levels.</title>
        <authorList>
            <person name="Mozzi A."/>
            <person name="Forcella M."/>
            <person name="Riva A."/>
            <person name="Difrancesco C."/>
            <person name="Molinari F."/>
            <person name="Martin V."/>
            <person name="Papini N."/>
            <person name="Bernasconi B."/>
            <person name="Nonnis S."/>
            <person name="Tedeschi G."/>
            <person name="Mazzucchelli L."/>
            <person name="Monti E."/>
            <person name="Fusi P."/>
            <person name="Frattini M."/>
        </authorList>
    </citation>
    <scope>FUNCTION</scope>
    <scope>CATALYTIC ACTIVITY</scope>
    <scope>MUTAGENESIS OF ASP-50 AND TYR-370</scope>
</reference>
<reference key="17">
    <citation type="journal article" date="2017" name="Sci. Rep.">
        <title>Human Sialidase Neu3 is S-Acylated and Behaves Like an Integral Membrane Protein.</title>
        <authorList>
            <person name="Rodriguez-Walker M."/>
            <person name="Daniotti J.L."/>
        </authorList>
    </citation>
    <scope>FUNCTION</scope>
    <scope>SUBCELLULAR LOCATION</scope>
    <scope>PALMITOYLATION</scope>
</reference>
<organism>
    <name type="scientific">Homo sapiens</name>
    <name type="common">Human</name>
    <dbReference type="NCBI Taxonomy" id="9606"/>
    <lineage>
        <taxon>Eukaryota</taxon>
        <taxon>Metazoa</taxon>
        <taxon>Chordata</taxon>
        <taxon>Craniata</taxon>
        <taxon>Vertebrata</taxon>
        <taxon>Euteleostomi</taxon>
        <taxon>Mammalia</taxon>
        <taxon>Eutheria</taxon>
        <taxon>Euarchontoglires</taxon>
        <taxon>Primates</taxon>
        <taxon>Haplorrhini</taxon>
        <taxon>Catarrhini</taxon>
        <taxon>Hominidae</taxon>
        <taxon>Homo</taxon>
    </lineage>
</organism>
<proteinExistence type="evidence at protein level"/>
<feature type="chain" id="PRO_0000208903" description="Sialidase-3">
    <location>
        <begin position="1"/>
        <end position="428"/>
    </location>
</feature>
<feature type="repeat" description="BNR 1">
    <location>
        <begin position="129"/>
        <end position="140"/>
    </location>
</feature>
<feature type="repeat" description="BNR 2">
    <location>
        <begin position="203"/>
        <end position="214"/>
    </location>
</feature>
<feature type="repeat" description="BNR 3">
    <location>
        <begin position="254"/>
        <end position="265"/>
    </location>
</feature>
<feature type="region of interest" description="Disordered" evidence="5">
    <location>
        <begin position="294"/>
        <end position="318"/>
    </location>
</feature>
<feature type="short sequence motif" description="FRIP motif">
    <location>
        <begin position="24"/>
        <end position="27"/>
    </location>
</feature>
<feature type="compositionally biased region" description="Polar residues" evidence="5">
    <location>
        <begin position="301"/>
        <end position="313"/>
    </location>
</feature>
<feature type="active site" description="Proton acceptor" evidence="13">
    <location>
        <position position="50"/>
    </location>
</feature>
<feature type="active site" description="Nucleophile" evidence="13">
    <location>
        <position position="370"/>
    </location>
</feature>
<feature type="active site" evidence="4">
    <location>
        <position position="387"/>
    </location>
</feature>
<feature type="binding site" evidence="1">
    <location>
        <position position="25"/>
    </location>
    <ligand>
        <name>substrate</name>
    </ligand>
</feature>
<feature type="binding site" evidence="19">
    <location>
        <position position="45"/>
    </location>
    <ligand>
        <name>substrate</name>
    </ligand>
</feature>
<feature type="binding site" evidence="19">
    <location>
        <position position="179"/>
    </location>
    <ligand>
        <name>substrate</name>
    </ligand>
</feature>
<feature type="binding site" evidence="19">
    <location>
        <position position="181"/>
    </location>
    <ligand>
        <name>substrate</name>
    </ligand>
</feature>
<feature type="binding site" evidence="19">
    <location>
        <position position="225"/>
    </location>
    <ligand>
        <name>substrate</name>
    </ligand>
</feature>
<feature type="binding site" evidence="19">
    <location>
        <position position="245"/>
    </location>
    <ligand>
        <name>substrate</name>
    </ligand>
</feature>
<feature type="binding site" evidence="19">
    <location>
        <position position="340"/>
    </location>
    <ligand>
        <name>substrate</name>
    </ligand>
</feature>
<feature type="modified residue" description="Phosphoserine" evidence="3">
    <location>
        <position position="313"/>
    </location>
</feature>
<feature type="splice variant" id="VSP_054145" description="In isoform 2." evidence="17 18">
    <original>M</original>
    <variation>MRPADLPPRPMEESPASSSAPTETEEPGSSAEVM</variation>
    <location>
        <position position="1"/>
    </location>
</feature>
<feature type="sequence variant" id="VAR_055839" description="In dbSNP:rs7115499.">
    <original>R</original>
    <variation>Q</variation>
    <location>
        <position position="15"/>
    </location>
</feature>
<feature type="mutagenesis site" description="Loss of enzyme activity." evidence="8">
    <original>R</original>
    <variation>H</variation>
    <location>
        <position position="25"/>
    </location>
</feature>
<feature type="mutagenesis site" description="Loss of enzyme activity." evidence="13">
    <original>R</original>
    <variation>V</variation>
    <location>
        <position position="45"/>
    </location>
</feature>
<feature type="mutagenesis site" description="Nearly abolishes enzyme activity." evidence="13 14">
    <original>D</original>
    <variation>S</variation>
    <variation>A</variation>
    <location>
        <position position="50"/>
    </location>
</feature>
<feature type="mutagenesis site" description="Decreases enzyme activity." evidence="8">
    <original>E</original>
    <variation>D</variation>
    <location>
        <position position="51"/>
    </location>
</feature>
<feature type="mutagenesis site" description="Markedly decreases enzyme activity." evidence="8">
    <original>N</original>
    <variation>D</variation>
    <location>
        <position position="88"/>
    </location>
</feature>
<feature type="mutagenesis site" description="Markedly decreases enzyme activity." evidence="8">
    <original>V</original>
    <variation>M</variation>
    <location>
        <position position="107"/>
    </location>
</feature>
<feature type="mutagenesis site" description="Decreases enzyme activity." evidence="8">
    <original>R</original>
    <variation>Q</variation>
    <location>
        <position position="114"/>
    </location>
</feature>
<feature type="mutagenesis site" description="Markedly decreases enzyme activity." evidence="8">
    <original>G</original>
    <variation>A</variation>
    <location>
        <position position="162"/>
    </location>
</feature>
<feature type="mutagenesis site" description="Loss of enzyme activity." evidence="13">
    <original>Y</original>
    <variation>F</variation>
    <location>
        <position position="179"/>
    </location>
</feature>
<feature type="mutagenesis site" description="Markedly decreases the recruitment within caveola." evidence="9">
    <original>Y</original>
    <variation>A</variation>
    <location>
        <position position="181"/>
    </location>
</feature>
<feature type="mutagenesis site" description="Nearly abolishes enzyme activity." evidence="13">
    <original>Y</original>
    <variation>F</variation>
    <location>
        <position position="181"/>
    </location>
</feature>
<feature type="mutagenesis site" description="Decreases the recruitment within caveola." evidence="9">
    <original>F</original>
    <variation>R</variation>
    <location>
        <position position="187"/>
    </location>
</feature>
<feature type="mutagenesis site" description="Loss of enzyme activity." evidence="13">
    <original>E</original>
    <variation>S</variation>
    <location>
        <position position="225"/>
    </location>
</feature>
<feature type="mutagenesis site" description="Loss of enzyme activity." evidence="13">
    <original>R</original>
    <variation>A</variation>
    <location>
        <position position="245"/>
    </location>
</feature>
<feature type="mutagenesis site" description="Loss of enzyme activity." evidence="13">
    <original>R</original>
    <variation>A</variation>
    <location>
        <position position="340"/>
    </location>
</feature>
<feature type="mutagenesis site" description="Loss of enzyme activity." evidence="8 13 14">
    <original>Y</original>
    <variation>F</variation>
    <variation>C</variation>
    <location>
        <position position="370"/>
    </location>
</feature>
<protein>
    <recommendedName>
        <fullName>Sialidase-3</fullName>
        <ecNumber evidence="6 7 8 9 10 13">3.2.1.18</ecNumber>
    </recommendedName>
    <alternativeName>
        <fullName>Ganglioside sialidasedis</fullName>
    </alternativeName>
    <alternativeName>
        <fullName>Membrane sialidase</fullName>
    </alternativeName>
    <alternativeName>
        <fullName>N-acetyl-alpha-neuraminidase 3</fullName>
    </alternativeName>
</protein>
<keyword id="KW-0025">Alternative splicing</keyword>
<keyword id="KW-0119">Carbohydrate metabolism</keyword>
<keyword id="KW-1003">Cell membrane</keyword>
<keyword id="KW-0967">Endosome</keyword>
<keyword id="KW-0326">Glycosidase</keyword>
<keyword id="KW-0378">Hydrolase</keyword>
<keyword id="KW-0442">Lipid degradation</keyword>
<keyword id="KW-0443">Lipid metabolism</keyword>
<keyword id="KW-0449">Lipoprotein</keyword>
<keyword id="KW-0458">Lysosome</keyword>
<keyword id="KW-0472">Membrane</keyword>
<keyword id="KW-0597">Phosphoprotein</keyword>
<keyword id="KW-1267">Proteomics identification</keyword>
<keyword id="KW-1185">Reference proteome</keyword>
<keyword id="KW-0677">Repeat</keyword>
<gene>
    <name type="primary">NEU3</name>
</gene>
<comment type="function">
    <text evidence="6 7 8 9 10 11 13 14 15 16">Exo-alpha-sialidase that catalyzes the hydrolytic cleavage of the terminal sialic acid (N-acetylneuraminic acid, Neu5Ac) of a glycan moiety in the catabolism of glycolipids, glycoproteins and oligosacharides. Displays high catalytic efficiency for gangliosides including alpha-(2-&gt;3)-sialylated GD1a and GM3 and alpha-(2-&gt;8)-sialylated GD3 (PubMed:10405317, PubMed:10861246, PubMed:11298736, PubMed:12011038, PubMed:15847605, PubMed:20511247, PubMed:28646141). Plays a role in the regulation of transmembrane signaling through the modulation of ganglioside content of the lipid bilayer and by direct interaction with signaling receptors, such as EGFR (PubMed:17334392, PubMed:25922362). Desialylates EGFR and activates downstream signaling in proliferating cells (PubMed:25922362). Contributes to clathrin-mediated endocytosis by regulating sorting of endocytosed receptors to early and recycling endosomes (PubMed:26251452).</text>
</comment>
<comment type="catalytic activity">
    <reaction evidence="6 7 8 9 10 13">
        <text>Hydrolysis of alpha-(2-&gt;3)-, alpha-(2-&gt;6)-, alpha-(2-&gt;8)- glycosidic linkages of terminal sialic acid residues in oligosaccharides, glycoproteins, glycolipids, colominic acid and synthetic substrates.</text>
        <dbReference type="EC" id="3.2.1.18"/>
    </reaction>
</comment>
<comment type="catalytic activity">
    <reaction evidence="6 8 10 14">
        <text>a ganglioside GD1a + H2O = a ganglioside GM1 + N-acetylneuraminate</text>
        <dbReference type="Rhea" id="RHEA:47832"/>
        <dbReference type="ChEBI" id="CHEBI:15377"/>
        <dbReference type="ChEBI" id="CHEBI:35418"/>
        <dbReference type="ChEBI" id="CHEBI:82637"/>
        <dbReference type="ChEBI" id="CHEBI:82639"/>
    </reaction>
    <physiologicalReaction direction="left-to-right" evidence="20 21 22 24">
        <dbReference type="Rhea" id="RHEA:47833"/>
    </physiologicalReaction>
</comment>
<comment type="catalytic activity">
    <reaction evidence="20 21 22">
        <text>a ganglioside GD1a (d18:1(4E)) + H2O = a ganglioside GM1 (d18:1(4E)) + N-acetylneuraminate</text>
        <dbReference type="Rhea" id="RHEA:47856"/>
        <dbReference type="ChEBI" id="CHEBI:15377"/>
        <dbReference type="ChEBI" id="CHEBI:35418"/>
        <dbReference type="ChEBI" id="CHEBI:77709"/>
        <dbReference type="ChEBI" id="CHEBI:78445"/>
    </reaction>
    <physiologicalReaction direction="left-to-right" evidence="20 21 22">
        <dbReference type="Rhea" id="RHEA:47857"/>
    </physiologicalReaction>
</comment>
<comment type="catalytic activity">
    <reaction evidence="6">
        <text>a ganglioside GD1b + H2O = a ganglioside GM1 + N-acetylneuraminate</text>
        <dbReference type="Rhea" id="RHEA:47876"/>
        <dbReference type="ChEBI" id="CHEBI:15377"/>
        <dbReference type="ChEBI" id="CHEBI:35418"/>
        <dbReference type="ChEBI" id="CHEBI:82639"/>
        <dbReference type="ChEBI" id="CHEBI:82939"/>
    </reaction>
    <physiologicalReaction direction="left-to-right" evidence="20">
        <dbReference type="Rhea" id="RHEA:47877"/>
    </physiologicalReaction>
</comment>
<comment type="catalytic activity">
    <reaction evidence="20">
        <text>a ganglioside GD1b (d18:1(4E)) + H2O = a ganglioside GM1 (d18:1(4E)) + N-acetylneuraminate</text>
        <dbReference type="Rhea" id="RHEA:48064"/>
        <dbReference type="ChEBI" id="CHEBI:15377"/>
        <dbReference type="ChEBI" id="CHEBI:35418"/>
        <dbReference type="ChEBI" id="CHEBI:77709"/>
        <dbReference type="ChEBI" id="CHEBI:87785"/>
    </reaction>
    <physiologicalReaction direction="left-to-right" evidence="20">
        <dbReference type="Rhea" id="RHEA:48065"/>
    </physiologicalReaction>
</comment>
<comment type="catalytic activity">
    <reaction evidence="6 8 10">
        <text>a ganglioside GD3 + H2O = a ganglioside GM3 + N-acetylneuraminate</text>
        <dbReference type="Rhea" id="RHEA:48120"/>
        <dbReference type="ChEBI" id="CHEBI:15377"/>
        <dbReference type="ChEBI" id="CHEBI:35418"/>
        <dbReference type="ChEBI" id="CHEBI:79210"/>
        <dbReference type="ChEBI" id="CHEBI:79214"/>
    </reaction>
    <physiologicalReaction direction="left-to-right" evidence="20 21 22">
        <dbReference type="Rhea" id="RHEA:48121"/>
    </physiologicalReaction>
</comment>
<comment type="catalytic activity">
    <reaction evidence="20 21 22">
        <text>a ganglioside GD3 (d18:1(4E)) + H2O = a ganglioside GM3 (d18:1(4E)) + N-acetylneuraminate</text>
        <dbReference type="Rhea" id="RHEA:48124"/>
        <dbReference type="ChEBI" id="CHEBI:15377"/>
        <dbReference type="ChEBI" id="CHEBI:35418"/>
        <dbReference type="ChEBI" id="CHEBI:60065"/>
        <dbReference type="ChEBI" id="CHEBI:78436"/>
    </reaction>
    <physiologicalReaction direction="left-to-right" evidence="20 21 22">
        <dbReference type="Rhea" id="RHEA:48125"/>
    </physiologicalReaction>
</comment>
<comment type="catalytic activity">
    <reaction evidence="6 10 11">
        <text>a ganglioside GM3 + H2O = a beta-D-galactosyl-(1-&gt;4)-beta-D-glucosyl-(1&lt;-&gt;1)-ceramide + N-acetylneuraminate</text>
        <dbReference type="Rhea" id="RHEA:48136"/>
        <dbReference type="ChEBI" id="CHEBI:15377"/>
        <dbReference type="ChEBI" id="CHEBI:35418"/>
        <dbReference type="ChEBI" id="CHEBI:79208"/>
        <dbReference type="ChEBI" id="CHEBI:79210"/>
    </reaction>
    <physiologicalReaction direction="left-to-right" evidence="20 22 23">
        <dbReference type="Rhea" id="RHEA:48137"/>
    </physiologicalReaction>
</comment>
<comment type="catalytic activity">
    <reaction evidence="3">
        <text>a ganglioside GM1 + H2O = a ganglioside GA1 + N-acetylneuraminate</text>
        <dbReference type="Rhea" id="RHEA:47872"/>
        <dbReference type="ChEBI" id="CHEBI:15377"/>
        <dbReference type="ChEBI" id="CHEBI:35418"/>
        <dbReference type="ChEBI" id="CHEBI:82639"/>
        <dbReference type="ChEBI" id="CHEBI:88069"/>
    </reaction>
    <physiologicalReaction direction="left-to-right" evidence="3">
        <dbReference type="Rhea" id="RHEA:47873"/>
    </physiologicalReaction>
</comment>
<comment type="catalytic activity">
    <reaction evidence="3">
        <text>a ganglioside GM1 (d18:1(4E)) + H2O = a ganglioside GA1 (d18:1(4E)) + N-acetylneuraminate</text>
        <dbReference type="Rhea" id="RHEA:48072"/>
        <dbReference type="ChEBI" id="CHEBI:15377"/>
        <dbReference type="ChEBI" id="CHEBI:27938"/>
        <dbReference type="ChEBI" id="CHEBI:35418"/>
        <dbReference type="ChEBI" id="CHEBI:77709"/>
    </reaction>
    <physiologicalReaction direction="left-to-right" evidence="3">
        <dbReference type="Rhea" id="RHEA:48073"/>
    </physiologicalReaction>
</comment>
<comment type="catalytic activity">
    <reaction evidence="3">
        <text>a ganglioside GM2 (d18:1(4E)) + H2O = a ganglioside GA2 (d18:1(4E)) + N-acetylneuraminate</text>
        <dbReference type="Rhea" id="RHEA:48068"/>
        <dbReference type="ChEBI" id="CHEBI:15377"/>
        <dbReference type="ChEBI" id="CHEBI:27731"/>
        <dbReference type="ChEBI" id="CHEBI:35418"/>
        <dbReference type="ChEBI" id="CHEBI:71502"/>
    </reaction>
    <physiologicalReaction direction="left-to-right" evidence="3">
        <dbReference type="Rhea" id="RHEA:48069"/>
    </physiologicalReaction>
</comment>
<comment type="catalytic activity">
    <reaction evidence="6 8 10">
        <text>a ganglioside GM3 (d18:1(4E)) + H2O = a beta-D-Gal-(1-&gt;4)-beta-D-Glc-(1&lt;-&gt;1)-Cer(d18:1(4E)) + N-acetylneuraminate</text>
        <dbReference type="Rhea" id="RHEA:47900"/>
        <dbReference type="ChEBI" id="CHEBI:15377"/>
        <dbReference type="ChEBI" id="CHEBI:17950"/>
        <dbReference type="ChEBI" id="CHEBI:35418"/>
        <dbReference type="ChEBI" id="CHEBI:60065"/>
    </reaction>
    <physiologicalReaction direction="left-to-right" evidence="20 21 22">
        <dbReference type="Rhea" id="RHEA:47901"/>
    </physiologicalReaction>
</comment>
<comment type="catalytic activity">
    <reaction evidence="2">
        <text>a ganglioside GT1b + H2O = a ganglioside GD1b + N-acetylneuraminate</text>
        <dbReference type="Rhea" id="RHEA:47828"/>
        <dbReference type="ChEBI" id="CHEBI:15377"/>
        <dbReference type="ChEBI" id="CHEBI:35418"/>
        <dbReference type="ChEBI" id="CHEBI:82939"/>
        <dbReference type="ChEBI" id="CHEBI:82940"/>
    </reaction>
    <physiologicalReaction direction="left-to-right" evidence="2">
        <dbReference type="Rhea" id="RHEA:47829"/>
    </physiologicalReaction>
</comment>
<comment type="biophysicochemical properties">
    <kinetics>
        <KM evidence="8">47 uM for ganglioside GD1a</KM>
    </kinetics>
    <phDependence>
        <text evidence="6 8">Optimum pH is 4.5-6.5.</text>
    </phDependence>
    <temperatureDependence>
        <text evidence="8">Optimum temperature is 20 degrees Celsius.</text>
    </temperatureDependence>
</comment>
<comment type="subunit">
    <text evidence="9 11">Interacts with CAV1; this interaction enhances NEU3 sialidase activity within caveola (PubMed:12011038). Interacts with EGFR; this interaction mediates desialylation of EGFR and enhances downstream signaling (PubMed:17334392).</text>
</comment>
<comment type="subcellular location">
    <subcellularLocation>
        <location evidence="7 12 15 16">Cell membrane</location>
        <topology evidence="7 12">Peripheral membrane protein</topology>
    </subcellularLocation>
    <subcellularLocation>
        <location evidence="9">Membrane</location>
        <location evidence="9">Caveola</location>
    </subcellularLocation>
    <subcellularLocation>
        <location evidence="15">Early endosome membrane</location>
        <topology evidence="25">Peripheral membrane protein</topology>
    </subcellularLocation>
    <subcellularLocation>
        <location evidence="15">Recycling endosome membrane</location>
        <topology evidence="25">Peripheral membrane protein</topology>
    </subcellularLocation>
    <subcellularLocation>
        <location evidence="15">Lysosome membrane</location>
        <topology evidence="25">Peripheral membrane protein</topology>
    </subcellularLocation>
    <text evidence="3 16">Associates with the external leaflet of the plasma membrane (By similarity). S-acylated NEU3 likely spans the lipid bilayer with a portion of C-terminus exposed to the cytosol and the catalytic region facing the extracellular space (PubMed:28646141).</text>
</comment>
<comment type="alternative products">
    <event type="alternative splicing"/>
    <isoform>
        <id>Q9UQ49-1</id>
        <name>1</name>
        <sequence type="displayed"/>
    </isoform>
    <isoform>
        <id>Q9UQ49-2</id>
        <name>2</name>
        <sequence type="described" ref="VSP_054145"/>
    </isoform>
</comment>
<comment type="tissue specificity">
    <text evidence="7">Highly expressed in skeletal muscle, testis, adrenal gland and thymus, followed by pancreas, liver, heart and thymus. Weakly expressed in kidney, placenta, brain and lung.</text>
</comment>
<comment type="PTM">
    <text evidence="16">Palmitoylated; may regulate intracellular trafficking and anchorage to plasma membrane and endomembranes.</text>
</comment>
<comment type="similarity">
    <text evidence="19">Belongs to the glycosyl hydrolase 33 family.</text>
</comment>
<comment type="sequence caution" evidence="19">
    <conflict type="erroneous initiation">
        <sequence resource="EMBL-CDS" id="CAB96131"/>
    </conflict>
    <text>Extended N-terminus.</text>
</comment>
<comment type="online information" name="Atlas of Genetics and Cytogenetics in Oncology and Haematology">
    <link uri="https://atlasgeneticsoncology.org/gene/44505/NEU3"/>
</comment>
<dbReference type="EC" id="3.2.1.18" evidence="6 7 8 9 10 13"/>
<dbReference type="EMBL" id="AB008185">
    <property type="protein sequence ID" value="BAA82611.1"/>
    <property type="molecule type" value="mRNA"/>
</dbReference>
<dbReference type="EMBL" id="Y18563">
    <property type="protein sequence ID" value="CAB96131.1"/>
    <property type="status" value="ALT_INIT"/>
    <property type="molecule type" value="mRNA"/>
</dbReference>
<dbReference type="EMBL" id="AK022450">
    <property type="protein sequence ID" value="BAG51074.1"/>
    <property type="molecule type" value="mRNA"/>
</dbReference>
<dbReference type="EMBL" id="AK290442">
    <property type="protein sequence ID" value="BAF83131.1"/>
    <property type="molecule type" value="mRNA"/>
</dbReference>
<dbReference type="EMBL" id="AP001992">
    <property type="status" value="NOT_ANNOTATED_CDS"/>
    <property type="molecule type" value="Genomic_DNA"/>
</dbReference>
<dbReference type="EMBL" id="CH471076">
    <property type="protein sequence ID" value="EAW74953.1"/>
    <property type="molecule type" value="Genomic_DNA"/>
</dbReference>
<dbReference type="EMBL" id="BC136397">
    <property type="protein sequence ID" value="AAI36398.1"/>
    <property type="molecule type" value="mRNA"/>
</dbReference>
<dbReference type="EMBL" id="BC144059">
    <property type="protein sequence ID" value="AAI44060.1"/>
    <property type="molecule type" value="mRNA"/>
</dbReference>
<dbReference type="CCDS" id="CCDS44682.1">
    <molecule id="Q9UQ49-2"/>
</dbReference>
<dbReference type="RefSeq" id="NP_001354789.1">
    <molecule id="Q9UQ49-2"/>
    <property type="nucleotide sequence ID" value="NM_001367860.1"/>
</dbReference>
<dbReference type="RefSeq" id="NP_006647.3">
    <molecule id="Q9UQ49-2"/>
    <property type="nucleotide sequence ID" value="NM_006656.5"/>
</dbReference>
<dbReference type="SMR" id="Q9UQ49"/>
<dbReference type="BioGRID" id="116038">
    <property type="interactions" value="26"/>
</dbReference>
<dbReference type="FunCoup" id="Q9UQ49">
    <property type="interactions" value="324"/>
</dbReference>
<dbReference type="IntAct" id="Q9UQ49">
    <property type="interactions" value="13"/>
</dbReference>
<dbReference type="STRING" id="9606.ENSP00000294064"/>
<dbReference type="BindingDB" id="Q9UQ49"/>
<dbReference type="ChEMBL" id="CHEMBL3046"/>
<dbReference type="DrugCentral" id="Q9UQ49"/>
<dbReference type="SwissLipids" id="SLP:000001372">
    <molecule id="Q9UQ49-1"/>
</dbReference>
<dbReference type="CAZy" id="GH33">
    <property type="family name" value="Glycoside Hydrolase Family 33"/>
</dbReference>
<dbReference type="iPTMnet" id="Q9UQ49"/>
<dbReference type="PhosphoSitePlus" id="Q9UQ49"/>
<dbReference type="SwissPalm" id="Q9UQ49"/>
<dbReference type="BioMuta" id="NEU3"/>
<dbReference type="DMDM" id="17369720"/>
<dbReference type="jPOST" id="Q9UQ49"/>
<dbReference type="MassIVE" id="Q9UQ49"/>
<dbReference type="PaxDb" id="9606-ENSP00000294064"/>
<dbReference type="PeptideAtlas" id="Q9UQ49"/>
<dbReference type="ProteomicsDB" id="1854"/>
<dbReference type="ProteomicsDB" id="85507">
    <molecule id="Q9UQ49-1"/>
</dbReference>
<dbReference type="Pumba" id="Q9UQ49"/>
<dbReference type="Antibodypedia" id="56317">
    <property type="antibodies" value="72 antibodies from 15 providers"/>
</dbReference>
<dbReference type="DNASU" id="10825"/>
<dbReference type="Ensembl" id="ENST00000294064.9">
    <molecule id="Q9UQ49-2"/>
    <property type="protein sequence ID" value="ENSP00000294064.4"/>
    <property type="gene ID" value="ENSG00000162139.10"/>
</dbReference>
<dbReference type="Ensembl" id="ENST00000531509.5">
    <molecule id="Q9UQ49-2"/>
    <property type="protein sequence ID" value="ENSP00000432097.1"/>
    <property type="gene ID" value="ENSG00000162139.10"/>
</dbReference>
<dbReference type="GeneID" id="10825"/>
<dbReference type="KEGG" id="hsa:10825"/>
<dbReference type="MANE-Select" id="ENST00000294064.9">
    <molecule id="Q9UQ49-2"/>
    <property type="protein sequence ID" value="ENSP00000294064.4"/>
    <property type="RefSeq nucleotide sequence ID" value="NM_006656.6"/>
    <property type="RefSeq protein sequence ID" value="NP_006647.3"/>
</dbReference>
<dbReference type="UCSC" id="uc001ovw.4">
    <molecule id="Q9UQ49-1"/>
    <property type="organism name" value="human"/>
</dbReference>
<dbReference type="AGR" id="HGNC:7760"/>
<dbReference type="CTD" id="10825"/>
<dbReference type="DisGeNET" id="10825"/>
<dbReference type="GeneCards" id="NEU3"/>
<dbReference type="HGNC" id="HGNC:7760">
    <property type="gene designation" value="NEU3"/>
</dbReference>
<dbReference type="HPA" id="ENSG00000162139">
    <property type="expression patterns" value="Low tissue specificity"/>
</dbReference>
<dbReference type="MIM" id="604617">
    <property type="type" value="gene"/>
</dbReference>
<dbReference type="neXtProt" id="NX_Q9UQ49"/>
<dbReference type="OpenTargets" id="ENSG00000162139"/>
<dbReference type="PharmGKB" id="PA31562"/>
<dbReference type="VEuPathDB" id="HostDB:ENSG00000162139"/>
<dbReference type="eggNOG" id="ENOG502QSFT">
    <property type="taxonomic scope" value="Eukaryota"/>
</dbReference>
<dbReference type="GeneTree" id="ENSGT00950000182944"/>
<dbReference type="HOGENOM" id="CLU_024620_2_0_1"/>
<dbReference type="InParanoid" id="Q9UQ49"/>
<dbReference type="OMA" id="ECGIKRE"/>
<dbReference type="OrthoDB" id="2739686at2759"/>
<dbReference type="PAN-GO" id="Q9UQ49">
    <property type="GO annotations" value="6 GO annotations based on evolutionary models"/>
</dbReference>
<dbReference type="PhylomeDB" id="Q9UQ49"/>
<dbReference type="TreeFam" id="TF331063"/>
<dbReference type="BRENDA" id="3.2.1.18">
    <property type="organism ID" value="2681"/>
</dbReference>
<dbReference type="PathwayCommons" id="Q9UQ49"/>
<dbReference type="Reactome" id="R-HSA-4085001">
    <property type="pathway name" value="Sialic acid metabolism"/>
</dbReference>
<dbReference type="Reactome" id="R-HSA-9840310">
    <property type="pathway name" value="Glycosphingolipid catabolism"/>
</dbReference>
<dbReference type="SABIO-RK" id="Q9UQ49"/>
<dbReference type="SignaLink" id="Q9UQ49"/>
<dbReference type="BioGRID-ORCS" id="10825">
    <property type="hits" value="15 hits in 1156 CRISPR screens"/>
</dbReference>
<dbReference type="ChiTaRS" id="NEU3">
    <property type="organism name" value="human"/>
</dbReference>
<dbReference type="GeneWiki" id="NEU3"/>
<dbReference type="GenomeRNAi" id="10825"/>
<dbReference type="Pharos" id="Q9UQ49">
    <property type="development level" value="Tchem"/>
</dbReference>
<dbReference type="PRO" id="PR:Q9UQ49"/>
<dbReference type="Proteomes" id="UP000005640">
    <property type="component" value="Chromosome 11"/>
</dbReference>
<dbReference type="RNAct" id="Q9UQ49">
    <property type="molecule type" value="protein"/>
</dbReference>
<dbReference type="Bgee" id="ENSG00000162139">
    <property type="expression patterns" value="Expressed in skeletal muscle tissue of rectus abdominis and 141 other cell types or tissues"/>
</dbReference>
<dbReference type="ExpressionAtlas" id="Q9UQ49">
    <property type="expression patterns" value="baseline and differential"/>
</dbReference>
<dbReference type="GO" id="GO:0005901">
    <property type="term" value="C:caveola"/>
    <property type="evidence" value="ECO:0007669"/>
    <property type="project" value="UniProtKB-SubCell"/>
</dbReference>
<dbReference type="GO" id="GO:0005737">
    <property type="term" value="C:cytoplasm"/>
    <property type="evidence" value="ECO:0000318"/>
    <property type="project" value="GO_Central"/>
</dbReference>
<dbReference type="GO" id="GO:0031901">
    <property type="term" value="C:early endosome membrane"/>
    <property type="evidence" value="ECO:0000314"/>
    <property type="project" value="UniProtKB"/>
</dbReference>
<dbReference type="GO" id="GO:0005765">
    <property type="term" value="C:lysosomal membrane"/>
    <property type="evidence" value="ECO:0000314"/>
    <property type="project" value="UniProtKB"/>
</dbReference>
<dbReference type="GO" id="GO:0005764">
    <property type="term" value="C:lysosome"/>
    <property type="evidence" value="ECO:0000318"/>
    <property type="project" value="GO_Central"/>
</dbReference>
<dbReference type="GO" id="GO:0016020">
    <property type="term" value="C:membrane"/>
    <property type="evidence" value="ECO:0000318"/>
    <property type="project" value="GO_Central"/>
</dbReference>
<dbReference type="GO" id="GO:0005886">
    <property type="term" value="C:plasma membrane"/>
    <property type="evidence" value="ECO:0000314"/>
    <property type="project" value="UniProtKB"/>
</dbReference>
<dbReference type="GO" id="GO:0055038">
    <property type="term" value="C:recycling endosome membrane"/>
    <property type="evidence" value="ECO:0000314"/>
    <property type="project" value="UniProtKB"/>
</dbReference>
<dbReference type="GO" id="GO:0016997">
    <property type="term" value="F:alpha-sialidase activity"/>
    <property type="evidence" value="ECO:0000314"/>
    <property type="project" value="MGI"/>
</dbReference>
<dbReference type="GO" id="GO:0004308">
    <property type="term" value="F:exo-alpha-sialidase activity"/>
    <property type="evidence" value="ECO:0000314"/>
    <property type="project" value="UniProtKB"/>
</dbReference>
<dbReference type="GO" id="GO:0005975">
    <property type="term" value="P:carbohydrate metabolic process"/>
    <property type="evidence" value="ECO:0000314"/>
    <property type="project" value="MGI"/>
</dbReference>
<dbReference type="GO" id="GO:0006689">
    <property type="term" value="P:ganglioside catabolic process"/>
    <property type="evidence" value="ECO:0000314"/>
    <property type="project" value="UniProtKB"/>
</dbReference>
<dbReference type="GO" id="GO:0046479">
    <property type="term" value="P:glycosphingolipid catabolic process"/>
    <property type="evidence" value="ECO:0000304"/>
    <property type="project" value="Reactome"/>
</dbReference>
<dbReference type="GO" id="GO:1900186">
    <property type="term" value="P:negative regulation of clathrin-dependent endocytosis"/>
    <property type="evidence" value="ECO:0000314"/>
    <property type="project" value="UniProtKB"/>
</dbReference>
<dbReference type="GO" id="GO:0009313">
    <property type="term" value="P:oligosaccharide catabolic process"/>
    <property type="evidence" value="ECO:0000314"/>
    <property type="project" value="UniProtKB"/>
</dbReference>
<dbReference type="GO" id="GO:0045742">
    <property type="term" value="P:positive regulation of epidermal growth factor receptor signaling pathway"/>
    <property type="evidence" value="ECO:0000315"/>
    <property type="project" value="UniProtKB"/>
</dbReference>
<dbReference type="CDD" id="cd15482">
    <property type="entry name" value="Sialidase_non-viral"/>
    <property type="match status" value="1"/>
</dbReference>
<dbReference type="FunFam" id="2.120.10.10:FF:000002">
    <property type="entry name" value="Neuraminidase 3"/>
    <property type="match status" value="1"/>
</dbReference>
<dbReference type="Gene3D" id="2.120.10.10">
    <property type="match status" value="1"/>
</dbReference>
<dbReference type="InterPro" id="IPR011040">
    <property type="entry name" value="Sialidase"/>
</dbReference>
<dbReference type="InterPro" id="IPR026856">
    <property type="entry name" value="Sialidase_fam"/>
</dbReference>
<dbReference type="InterPro" id="IPR036278">
    <property type="entry name" value="Sialidase_sf"/>
</dbReference>
<dbReference type="PANTHER" id="PTHR10628">
    <property type="entry name" value="SIALIDASE"/>
    <property type="match status" value="1"/>
</dbReference>
<dbReference type="PANTHER" id="PTHR10628:SF23">
    <property type="entry name" value="SIALIDASE-3"/>
    <property type="match status" value="1"/>
</dbReference>
<dbReference type="Pfam" id="PF13088">
    <property type="entry name" value="BNR_2"/>
    <property type="match status" value="1"/>
</dbReference>
<dbReference type="SUPFAM" id="SSF50939">
    <property type="entry name" value="Sialidases"/>
    <property type="match status" value="1"/>
</dbReference>
<name>NEUR3_HUMAN</name>
<accession>Q9UQ49</accession>
<accession>A8K327</accession>
<accession>Q9NQE1</accession>